<feature type="chain" id="PRO_0000351541" description="3-hydroxy-5-phosphonooxypentane-2,4-dione thiolase">
    <location>
        <begin position="1"/>
        <end position="291"/>
    </location>
</feature>
<feature type="active site" description="Schiff-base intermediate with substrate" evidence="1">
    <location>
        <position position="203"/>
    </location>
</feature>
<reference key="1">
    <citation type="journal article" date="2007" name="PLoS Genet.">
        <title>The complete genome sequence of Yersinia pseudotuberculosis IP31758, the causative agent of Far East scarlet-like fever.</title>
        <authorList>
            <person name="Eppinger M."/>
            <person name="Rosovitz M.J."/>
            <person name="Fricke W.F."/>
            <person name="Rasko D.A."/>
            <person name="Kokorina G."/>
            <person name="Fayolle C."/>
            <person name="Lindler L.E."/>
            <person name="Carniel E."/>
            <person name="Ravel J."/>
        </authorList>
    </citation>
    <scope>NUCLEOTIDE SEQUENCE [LARGE SCALE GENOMIC DNA]</scope>
    <source>
        <strain>IP 31758</strain>
    </source>
</reference>
<evidence type="ECO:0000255" key="1">
    <source>
        <dbReference type="HAMAP-Rule" id="MF_02052"/>
    </source>
</evidence>
<name>LSRF_YERP3</name>
<accession>A7FMK1</accession>
<protein>
    <recommendedName>
        <fullName evidence="1">3-hydroxy-5-phosphonooxypentane-2,4-dione thiolase</fullName>
        <ecNumber evidence="1">2.3.1.245</ecNumber>
    </recommendedName>
</protein>
<comment type="function">
    <text evidence="1">Involved in the degradation of phospho-AI-2, thereby terminating induction of the lsr operon and closing the AI-2 signaling cycle. Catalyzes the transfer of an acetyl moiety from 3-hydroxy-5-phosphonooxypentane-2,4-dione to CoA to form glycerone phosphate and acetyl-CoA.</text>
</comment>
<comment type="catalytic activity">
    <reaction evidence="1">
        <text>dihydroxyacetone phosphate + acetyl-CoA = 3-hydroxy-2,4-dioxopentyl phosphate + CoA</text>
        <dbReference type="Rhea" id="RHEA:44736"/>
        <dbReference type="ChEBI" id="CHEBI:57287"/>
        <dbReference type="ChEBI" id="CHEBI:57288"/>
        <dbReference type="ChEBI" id="CHEBI:57642"/>
        <dbReference type="ChEBI" id="CHEBI:84359"/>
        <dbReference type="EC" id="2.3.1.245"/>
    </reaction>
</comment>
<comment type="subunit">
    <text evidence="1">Homodecamer.</text>
</comment>
<comment type="subcellular location">
    <subcellularLocation>
        <location evidence="1">Cytoplasm</location>
    </subcellularLocation>
</comment>
<comment type="similarity">
    <text evidence="1">Belongs to the DeoC/FbaB aldolase family.</text>
</comment>
<proteinExistence type="inferred from homology"/>
<keyword id="KW-0963">Cytoplasm</keyword>
<keyword id="KW-0704">Schiff base</keyword>
<keyword id="KW-0808">Transferase</keyword>
<sequence length="291" mass="31563">MADLDDIKDGKDFGIGIPQQNPAFTLKGSGSLDWGMQSRLARIFNPKTNRTVMLAFDHGYFQGPTTGLERIDINIAPLFEYADVLMCTRGILRSVVPAAANRPVVLRASGANSILTDLSNEAVAVAMEDAVRLNACAVAAQVYIGTEHEHQSIKNIIQLIDQGMRYGMPTMAVTGVGKDMVRDQRYFSLASRIAAEMGAQVIKTYYVDSGFERIAAGCPVPIVIAGGKKLPERDALEMCYQAIDQGASGVDMGRNIFQSDAPIAMLKAVHAIVHKNENAAAAYQLFLHEQN</sequence>
<dbReference type="EC" id="2.3.1.245" evidence="1"/>
<dbReference type="EMBL" id="CP000720">
    <property type="protein sequence ID" value="ABS49352.1"/>
    <property type="molecule type" value="Genomic_DNA"/>
</dbReference>
<dbReference type="RefSeq" id="WP_011191661.1">
    <property type="nucleotide sequence ID" value="NC_009708.1"/>
</dbReference>
<dbReference type="SMR" id="A7FMK1"/>
<dbReference type="KEGG" id="ypi:YpsIP31758_3525"/>
<dbReference type="HOGENOM" id="CLU_057069_1_0_6"/>
<dbReference type="Proteomes" id="UP000002412">
    <property type="component" value="Chromosome"/>
</dbReference>
<dbReference type="GO" id="GO:0005737">
    <property type="term" value="C:cytoplasm"/>
    <property type="evidence" value="ECO:0007669"/>
    <property type="project" value="UniProtKB-SubCell"/>
</dbReference>
<dbReference type="GO" id="GO:0016747">
    <property type="term" value="F:acyltransferase activity, transferring groups other than amino-acyl groups"/>
    <property type="evidence" value="ECO:0007669"/>
    <property type="project" value="UniProtKB-UniRule"/>
</dbReference>
<dbReference type="GO" id="GO:0004332">
    <property type="term" value="F:fructose-bisphosphate aldolase activity"/>
    <property type="evidence" value="ECO:0007669"/>
    <property type="project" value="InterPro"/>
</dbReference>
<dbReference type="CDD" id="cd00958">
    <property type="entry name" value="DhnA"/>
    <property type="match status" value="1"/>
</dbReference>
<dbReference type="Gene3D" id="3.20.20.70">
    <property type="entry name" value="Aldolase class I"/>
    <property type="match status" value="1"/>
</dbReference>
<dbReference type="HAMAP" id="MF_02052">
    <property type="entry name" value="LsrF"/>
    <property type="match status" value="1"/>
</dbReference>
<dbReference type="InterPro" id="IPR013785">
    <property type="entry name" value="Aldolase_TIM"/>
</dbReference>
<dbReference type="InterPro" id="IPR002915">
    <property type="entry name" value="DeoC/FbaB/LacD_aldolase"/>
</dbReference>
<dbReference type="InterPro" id="IPR050456">
    <property type="entry name" value="DeoC/FbaB_aldolase"/>
</dbReference>
<dbReference type="InterPro" id="IPR041720">
    <property type="entry name" value="FbaB-like"/>
</dbReference>
<dbReference type="InterPro" id="IPR033673">
    <property type="entry name" value="LsrF"/>
</dbReference>
<dbReference type="NCBIfam" id="NF006081">
    <property type="entry name" value="PRK08227.1"/>
    <property type="match status" value="1"/>
</dbReference>
<dbReference type="PANTHER" id="PTHR47916:SF1">
    <property type="entry name" value="3-HYDROXY-5-PHOSPHONOOXYPENTANE-2,4-DIONE THIOLASE"/>
    <property type="match status" value="1"/>
</dbReference>
<dbReference type="PANTHER" id="PTHR47916">
    <property type="entry name" value="FRUCTOSE-BISPHOSPHATE ALDOLASE CLASS 1"/>
    <property type="match status" value="1"/>
</dbReference>
<dbReference type="Pfam" id="PF01791">
    <property type="entry name" value="DeoC"/>
    <property type="match status" value="1"/>
</dbReference>
<dbReference type="PIRSF" id="PIRSF038992">
    <property type="entry name" value="Aldolase_Ia"/>
    <property type="match status" value="1"/>
</dbReference>
<dbReference type="SMART" id="SM01133">
    <property type="entry name" value="DeoC"/>
    <property type="match status" value="1"/>
</dbReference>
<dbReference type="SUPFAM" id="SSF51569">
    <property type="entry name" value="Aldolase"/>
    <property type="match status" value="1"/>
</dbReference>
<gene>
    <name evidence="1" type="primary">lsrF</name>
    <name type="ordered locus">YpsIP31758_3525</name>
</gene>
<organism>
    <name type="scientific">Yersinia pseudotuberculosis serotype O:1b (strain IP 31758)</name>
    <dbReference type="NCBI Taxonomy" id="349747"/>
    <lineage>
        <taxon>Bacteria</taxon>
        <taxon>Pseudomonadati</taxon>
        <taxon>Pseudomonadota</taxon>
        <taxon>Gammaproteobacteria</taxon>
        <taxon>Enterobacterales</taxon>
        <taxon>Yersiniaceae</taxon>
        <taxon>Yersinia</taxon>
    </lineage>
</organism>